<accession>P0ADD1</accession>
<accession>P39395</accession>
<gene>
    <name type="primary">yjiX</name>
    <name type="ordered locus">SF4371</name>
    <name type="ordered locus">S4641</name>
</gene>
<organism>
    <name type="scientific">Shigella flexneri</name>
    <dbReference type="NCBI Taxonomy" id="623"/>
    <lineage>
        <taxon>Bacteria</taxon>
        <taxon>Pseudomonadati</taxon>
        <taxon>Pseudomonadota</taxon>
        <taxon>Gammaproteobacteria</taxon>
        <taxon>Enterobacterales</taxon>
        <taxon>Enterobacteriaceae</taxon>
        <taxon>Shigella</taxon>
    </lineage>
</organism>
<reference key="1">
    <citation type="journal article" date="2002" name="Nucleic Acids Res.">
        <title>Genome sequence of Shigella flexneri 2a: insights into pathogenicity through comparison with genomes of Escherichia coli K12 and O157.</title>
        <authorList>
            <person name="Jin Q."/>
            <person name="Yuan Z."/>
            <person name="Xu J."/>
            <person name="Wang Y."/>
            <person name="Shen Y."/>
            <person name="Lu W."/>
            <person name="Wang J."/>
            <person name="Liu H."/>
            <person name="Yang J."/>
            <person name="Yang F."/>
            <person name="Zhang X."/>
            <person name="Zhang J."/>
            <person name="Yang G."/>
            <person name="Wu H."/>
            <person name="Qu D."/>
            <person name="Dong J."/>
            <person name="Sun L."/>
            <person name="Xue Y."/>
            <person name="Zhao A."/>
            <person name="Gao Y."/>
            <person name="Zhu J."/>
            <person name="Kan B."/>
            <person name="Ding K."/>
            <person name="Chen S."/>
            <person name="Cheng H."/>
            <person name="Yao Z."/>
            <person name="He B."/>
            <person name="Chen R."/>
            <person name="Ma D."/>
            <person name="Qiang B."/>
            <person name="Wen Y."/>
            <person name="Hou Y."/>
            <person name="Yu J."/>
        </authorList>
    </citation>
    <scope>NUCLEOTIDE SEQUENCE [LARGE SCALE GENOMIC DNA]</scope>
    <source>
        <strain>301 / Serotype 2a</strain>
    </source>
</reference>
<reference key="2">
    <citation type="journal article" date="2003" name="Infect. Immun.">
        <title>Complete genome sequence and comparative genomics of Shigella flexneri serotype 2a strain 2457T.</title>
        <authorList>
            <person name="Wei J."/>
            <person name="Goldberg M.B."/>
            <person name="Burland V."/>
            <person name="Venkatesan M.M."/>
            <person name="Deng W."/>
            <person name="Fournier G."/>
            <person name="Mayhew G.F."/>
            <person name="Plunkett G. III"/>
            <person name="Rose D.J."/>
            <person name="Darling A."/>
            <person name="Mau B."/>
            <person name="Perna N.T."/>
            <person name="Payne S.M."/>
            <person name="Runyen-Janecky L.J."/>
            <person name="Zhou S."/>
            <person name="Schwartz D.C."/>
            <person name="Blattner F.R."/>
        </authorList>
    </citation>
    <scope>NUCLEOTIDE SEQUENCE [LARGE SCALE GENOMIC DNA]</scope>
    <source>
        <strain>ATCC 700930 / 2457T / Serotype 2a</strain>
    </source>
</reference>
<proteinExistence type="predicted"/>
<feature type="chain" id="PRO_0000169803" description="Uncharacterized protein YjiX">
    <location>
        <begin position="1"/>
        <end position="67"/>
    </location>
</feature>
<keyword id="KW-1185">Reference proteome</keyword>
<dbReference type="EMBL" id="AE005674">
    <property type="protein sequence ID" value="AAN45787.1"/>
    <property type="molecule type" value="Genomic_DNA"/>
</dbReference>
<dbReference type="EMBL" id="AE014073">
    <property type="protein sequence ID" value="AAP19567.1"/>
    <property type="molecule type" value="Genomic_DNA"/>
</dbReference>
<dbReference type="RefSeq" id="NP_710080.1">
    <property type="nucleotide sequence ID" value="NC_004337.2"/>
</dbReference>
<dbReference type="RefSeq" id="WP_000467859.1">
    <property type="nucleotide sequence ID" value="NZ_WPGW01000045.1"/>
</dbReference>
<dbReference type="STRING" id="198214.SF4371"/>
<dbReference type="PaxDb" id="198214-SF4371"/>
<dbReference type="GeneID" id="1026700"/>
<dbReference type="KEGG" id="sfl:SF4371"/>
<dbReference type="KEGG" id="sfx:S4641"/>
<dbReference type="PATRIC" id="fig|198214.7.peg.5152"/>
<dbReference type="HOGENOM" id="CLU_171734_1_1_6"/>
<dbReference type="Proteomes" id="UP000001006">
    <property type="component" value="Chromosome"/>
</dbReference>
<dbReference type="Proteomes" id="UP000002673">
    <property type="component" value="Chromosome"/>
</dbReference>
<dbReference type="InterPro" id="IPR007423">
    <property type="entry name" value="Sel_put"/>
</dbReference>
<dbReference type="PANTHER" id="PTHR38453:SF1">
    <property type="entry name" value="CYTOPLASMIC PROTEIN"/>
    <property type="match status" value="1"/>
</dbReference>
<dbReference type="PANTHER" id="PTHR38453">
    <property type="entry name" value="CYTOPLASMIC PROTEIN-RELATED"/>
    <property type="match status" value="1"/>
</dbReference>
<dbReference type="Pfam" id="PF04328">
    <property type="entry name" value="Sel_put"/>
    <property type="match status" value="1"/>
</dbReference>
<sequence>MFGNLGQAKKYLGQAAKMLIGIPDYDNYVEHMKTNHPDKPYMSYEEFFRERQNARYGGDGKGGMRCC</sequence>
<name>YJIX_SHIFL</name>
<protein>
    <recommendedName>
        <fullName>Uncharacterized protein YjiX</fullName>
    </recommendedName>
</protein>
<evidence type="ECO:0000305" key="1"/>
<comment type="similarity">
    <text evidence="1">To E.coli YbdD.</text>
</comment>